<organism>
    <name type="scientific">Yersinia pestis (strain Pestoides F)</name>
    <dbReference type="NCBI Taxonomy" id="386656"/>
    <lineage>
        <taxon>Bacteria</taxon>
        <taxon>Pseudomonadati</taxon>
        <taxon>Pseudomonadota</taxon>
        <taxon>Gammaproteobacteria</taxon>
        <taxon>Enterobacterales</taxon>
        <taxon>Yersiniaceae</taxon>
        <taxon>Yersinia</taxon>
    </lineage>
</organism>
<dbReference type="EC" id="3.6.5.n1" evidence="1"/>
<dbReference type="EMBL" id="CP000668">
    <property type="protein sequence ID" value="ABP39942.1"/>
    <property type="molecule type" value="Genomic_DNA"/>
</dbReference>
<dbReference type="RefSeq" id="WP_011906267.1">
    <property type="nucleotide sequence ID" value="NZ_CP009715.1"/>
</dbReference>
<dbReference type="SMR" id="A4TKY0"/>
<dbReference type="KEGG" id="ypp:YPDSF_1555"/>
<dbReference type="PATRIC" id="fig|386656.14.peg.2216"/>
<dbReference type="GO" id="GO:0005886">
    <property type="term" value="C:plasma membrane"/>
    <property type="evidence" value="ECO:0007669"/>
    <property type="project" value="UniProtKB-SubCell"/>
</dbReference>
<dbReference type="GO" id="GO:0005525">
    <property type="term" value="F:GTP binding"/>
    <property type="evidence" value="ECO:0007669"/>
    <property type="project" value="UniProtKB-UniRule"/>
</dbReference>
<dbReference type="GO" id="GO:0003924">
    <property type="term" value="F:GTPase activity"/>
    <property type="evidence" value="ECO:0007669"/>
    <property type="project" value="UniProtKB-UniRule"/>
</dbReference>
<dbReference type="GO" id="GO:0097216">
    <property type="term" value="F:guanosine tetraphosphate binding"/>
    <property type="evidence" value="ECO:0007669"/>
    <property type="project" value="UniProtKB-ARBA"/>
</dbReference>
<dbReference type="GO" id="GO:0043022">
    <property type="term" value="F:ribosome binding"/>
    <property type="evidence" value="ECO:0007669"/>
    <property type="project" value="UniProtKB-UniRule"/>
</dbReference>
<dbReference type="GO" id="GO:0003746">
    <property type="term" value="F:translation elongation factor activity"/>
    <property type="evidence" value="ECO:0007669"/>
    <property type="project" value="UniProtKB-UniRule"/>
</dbReference>
<dbReference type="GO" id="GO:0045727">
    <property type="term" value="P:positive regulation of translation"/>
    <property type="evidence" value="ECO:0007669"/>
    <property type="project" value="UniProtKB-UniRule"/>
</dbReference>
<dbReference type="CDD" id="cd03699">
    <property type="entry name" value="EF4_II"/>
    <property type="match status" value="1"/>
</dbReference>
<dbReference type="CDD" id="cd16260">
    <property type="entry name" value="EF4_III"/>
    <property type="match status" value="1"/>
</dbReference>
<dbReference type="CDD" id="cd01890">
    <property type="entry name" value="LepA"/>
    <property type="match status" value="1"/>
</dbReference>
<dbReference type="CDD" id="cd03709">
    <property type="entry name" value="lepA_C"/>
    <property type="match status" value="1"/>
</dbReference>
<dbReference type="FunFam" id="3.30.70.240:FF:000005">
    <property type="entry name" value="Elongation factor 4"/>
    <property type="match status" value="1"/>
</dbReference>
<dbReference type="FunFam" id="3.40.50.300:FF:000078">
    <property type="entry name" value="Elongation factor 4"/>
    <property type="match status" value="1"/>
</dbReference>
<dbReference type="FunFam" id="2.40.30.10:FF:000015">
    <property type="entry name" value="Translation factor GUF1, mitochondrial"/>
    <property type="match status" value="1"/>
</dbReference>
<dbReference type="FunFam" id="3.30.70.2570:FF:000001">
    <property type="entry name" value="Translation factor GUF1, mitochondrial"/>
    <property type="match status" value="1"/>
</dbReference>
<dbReference type="FunFam" id="3.30.70.870:FF:000004">
    <property type="entry name" value="Translation factor GUF1, mitochondrial"/>
    <property type="match status" value="1"/>
</dbReference>
<dbReference type="Gene3D" id="3.30.70.240">
    <property type="match status" value="1"/>
</dbReference>
<dbReference type="Gene3D" id="3.30.70.2570">
    <property type="entry name" value="Elongation factor 4, C-terminal domain"/>
    <property type="match status" value="1"/>
</dbReference>
<dbReference type="Gene3D" id="3.30.70.870">
    <property type="entry name" value="Elongation Factor G (Translational Gtpase), domain 3"/>
    <property type="match status" value="1"/>
</dbReference>
<dbReference type="Gene3D" id="3.40.50.300">
    <property type="entry name" value="P-loop containing nucleotide triphosphate hydrolases"/>
    <property type="match status" value="1"/>
</dbReference>
<dbReference type="Gene3D" id="2.40.30.10">
    <property type="entry name" value="Translation factors"/>
    <property type="match status" value="1"/>
</dbReference>
<dbReference type="HAMAP" id="MF_00071">
    <property type="entry name" value="LepA"/>
    <property type="match status" value="1"/>
</dbReference>
<dbReference type="InterPro" id="IPR006297">
    <property type="entry name" value="EF-4"/>
</dbReference>
<dbReference type="InterPro" id="IPR035647">
    <property type="entry name" value="EFG_III/V"/>
</dbReference>
<dbReference type="InterPro" id="IPR000640">
    <property type="entry name" value="EFG_V-like"/>
</dbReference>
<dbReference type="InterPro" id="IPR004161">
    <property type="entry name" value="EFTu-like_2"/>
</dbReference>
<dbReference type="InterPro" id="IPR031157">
    <property type="entry name" value="G_TR_CS"/>
</dbReference>
<dbReference type="InterPro" id="IPR038363">
    <property type="entry name" value="LepA_C_sf"/>
</dbReference>
<dbReference type="InterPro" id="IPR013842">
    <property type="entry name" value="LepA_CTD"/>
</dbReference>
<dbReference type="InterPro" id="IPR035654">
    <property type="entry name" value="LepA_IV"/>
</dbReference>
<dbReference type="InterPro" id="IPR027417">
    <property type="entry name" value="P-loop_NTPase"/>
</dbReference>
<dbReference type="InterPro" id="IPR005225">
    <property type="entry name" value="Small_GTP-bd"/>
</dbReference>
<dbReference type="InterPro" id="IPR000795">
    <property type="entry name" value="T_Tr_GTP-bd_dom"/>
</dbReference>
<dbReference type="NCBIfam" id="TIGR01393">
    <property type="entry name" value="lepA"/>
    <property type="match status" value="1"/>
</dbReference>
<dbReference type="NCBIfam" id="TIGR00231">
    <property type="entry name" value="small_GTP"/>
    <property type="match status" value="1"/>
</dbReference>
<dbReference type="PANTHER" id="PTHR43512:SF4">
    <property type="entry name" value="TRANSLATION FACTOR GUF1 HOMOLOG, CHLOROPLASTIC"/>
    <property type="match status" value="1"/>
</dbReference>
<dbReference type="PANTHER" id="PTHR43512">
    <property type="entry name" value="TRANSLATION FACTOR GUF1-RELATED"/>
    <property type="match status" value="1"/>
</dbReference>
<dbReference type="Pfam" id="PF00679">
    <property type="entry name" value="EFG_C"/>
    <property type="match status" value="1"/>
</dbReference>
<dbReference type="Pfam" id="PF00009">
    <property type="entry name" value="GTP_EFTU"/>
    <property type="match status" value="1"/>
</dbReference>
<dbReference type="Pfam" id="PF03144">
    <property type="entry name" value="GTP_EFTU_D2"/>
    <property type="match status" value="1"/>
</dbReference>
<dbReference type="Pfam" id="PF06421">
    <property type="entry name" value="LepA_C"/>
    <property type="match status" value="1"/>
</dbReference>
<dbReference type="PRINTS" id="PR00315">
    <property type="entry name" value="ELONGATNFCT"/>
</dbReference>
<dbReference type="SUPFAM" id="SSF54980">
    <property type="entry name" value="EF-G C-terminal domain-like"/>
    <property type="match status" value="2"/>
</dbReference>
<dbReference type="SUPFAM" id="SSF52540">
    <property type="entry name" value="P-loop containing nucleoside triphosphate hydrolases"/>
    <property type="match status" value="1"/>
</dbReference>
<dbReference type="PROSITE" id="PS00301">
    <property type="entry name" value="G_TR_1"/>
    <property type="match status" value="1"/>
</dbReference>
<dbReference type="PROSITE" id="PS51722">
    <property type="entry name" value="G_TR_2"/>
    <property type="match status" value="1"/>
</dbReference>
<sequence length="599" mass="66695">MNHIRNFSIIAHIDHGKSTLSDRIIQICGGLSEREMAAQVLDSMDLERERGITIKAQSVTLDYHSKDGQTYQLNFIDTPGHVDFSYEVSRSLAACEGALLVVDAGQGVEAQTLANCYTAMEMDLEVVPVLNKIDLPAADPERVAEEIEDIVGIDATDAIRCSAKTGVGVPDVLERLVRDIPAPEGDPNGPLQALIIDSWFDNYLGVVSLIRIKNGSLRKGDKVKVMSTGQSYNADRLGIFTPKRVDRDVLNCGEVGWLVCAIKDILGAPVGDTLTLTRNPAEKSLPGFKKVKPQVYAGLFPISSDDYESFRDALGKLSLNDASLFYEPESSTALGFGFRCGFLGLLHMEIIQERLEREYDLELITTAPTVVYEVITTNQETVYVDSPSKLPALNNIEELREPIAECHMLLPQEYLGNVITLCIEKRGTQTNMVYHGKQVALTYEIPMAEVVLDFFDRLKSTSRGYASLDYNFKRFQTSDMVRVDVLINNERVDALALITHRDNAQYRGRDLVEKMKELIPRQQFDIAIQAAIGNHIIARSTVKQLRKNVLAKCYGGDVSRKKKLLQKQKDGKKRMKQVGNVELPQEAFLAILHVGKDSK</sequence>
<comment type="function">
    <text evidence="1">Required for accurate and efficient protein synthesis under certain stress conditions. May act as a fidelity factor of the translation reaction, by catalyzing a one-codon backward translocation of tRNAs on improperly translocated ribosomes. Back-translocation proceeds from a post-translocation (POST) complex to a pre-translocation (PRE) complex, thus giving elongation factor G a second chance to translocate the tRNAs correctly. Binds to ribosomes in a GTP-dependent manner.</text>
</comment>
<comment type="catalytic activity">
    <reaction evidence="1">
        <text>GTP + H2O = GDP + phosphate + H(+)</text>
        <dbReference type="Rhea" id="RHEA:19669"/>
        <dbReference type="ChEBI" id="CHEBI:15377"/>
        <dbReference type="ChEBI" id="CHEBI:15378"/>
        <dbReference type="ChEBI" id="CHEBI:37565"/>
        <dbReference type="ChEBI" id="CHEBI:43474"/>
        <dbReference type="ChEBI" id="CHEBI:58189"/>
        <dbReference type="EC" id="3.6.5.n1"/>
    </reaction>
</comment>
<comment type="subcellular location">
    <subcellularLocation>
        <location evidence="1">Cell inner membrane</location>
        <topology evidence="1">Peripheral membrane protein</topology>
        <orientation evidence="1">Cytoplasmic side</orientation>
    </subcellularLocation>
</comment>
<comment type="similarity">
    <text evidence="1">Belongs to the TRAFAC class translation factor GTPase superfamily. Classic translation factor GTPase family. LepA subfamily.</text>
</comment>
<evidence type="ECO:0000255" key="1">
    <source>
        <dbReference type="HAMAP-Rule" id="MF_00071"/>
    </source>
</evidence>
<keyword id="KW-0997">Cell inner membrane</keyword>
<keyword id="KW-1003">Cell membrane</keyword>
<keyword id="KW-0342">GTP-binding</keyword>
<keyword id="KW-0378">Hydrolase</keyword>
<keyword id="KW-0472">Membrane</keyword>
<keyword id="KW-0547">Nucleotide-binding</keyword>
<keyword id="KW-0648">Protein biosynthesis</keyword>
<feature type="chain" id="PRO_1000032070" description="Elongation factor 4">
    <location>
        <begin position="1"/>
        <end position="599"/>
    </location>
</feature>
<feature type="domain" description="tr-type G">
    <location>
        <begin position="2"/>
        <end position="184"/>
    </location>
</feature>
<feature type="binding site" evidence="1">
    <location>
        <begin position="14"/>
        <end position="19"/>
    </location>
    <ligand>
        <name>GTP</name>
        <dbReference type="ChEBI" id="CHEBI:37565"/>
    </ligand>
</feature>
<feature type="binding site" evidence="1">
    <location>
        <begin position="131"/>
        <end position="134"/>
    </location>
    <ligand>
        <name>GTP</name>
        <dbReference type="ChEBI" id="CHEBI:37565"/>
    </ligand>
</feature>
<reference key="1">
    <citation type="submission" date="2007-02" db="EMBL/GenBank/DDBJ databases">
        <title>Complete sequence of chromosome of Yersinia pestis Pestoides F.</title>
        <authorList>
            <consortium name="US DOE Joint Genome Institute"/>
            <person name="Copeland A."/>
            <person name="Lucas S."/>
            <person name="Lapidus A."/>
            <person name="Barry K."/>
            <person name="Detter J.C."/>
            <person name="Glavina del Rio T."/>
            <person name="Hammon N."/>
            <person name="Israni S."/>
            <person name="Dalin E."/>
            <person name="Tice H."/>
            <person name="Pitluck S."/>
            <person name="Di Bartolo G."/>
            <person name="Chain P."/>
            <person name="Malfatti S."/>
            <person name="Shin M."/>
            <person name="Vergez L."/>
            <person name="Schmutz J."/>
            <person name="Larimer F."/>
            <person name="Land M."/>
            <person name="Hauser L."/>
            <person name="Worsham P."/>
            <person name="Chu M."/>
            <person name="Bearden S."/>
            <person name="Garcia E."/>
            <person name="Richardson P."/>
        </authorList>
    </citation>
    <scope>NUCLEOTIDE SEQUENCE [LARGE SCALE GENOMIC DNA]</scope>
    <source>
        <strain>Pestoides F</strain>
    </source>
</reference>
<name>LEPA_YERPP</name>
<gene>
    <name evidence="1" type="primary">lepA</name>
    <name type="ordered locus">YPDSF_1555</name>
</gene>
<proteinExistence type="inferred from homology"/>
<accession>A4TKY0</accession>
<protein>
    <recommendedName>
        <fullName evidence="1">Elongation factor 4</fullName>
        <shortName evidence="1">EF-4</shortName>
        <ecNumber evidence="1">3.6.5.n1</ecNumber>
    </recommendedName>
    <alternativeName>
        <fullName evidence="1">Ribosomal back-translocase LepA</fullName>
    </alternativeName>
</protein>